<reference key="1">
    <citation type="submission" date="2007-02" db="EMBL/GenBank/DDBJ databases">
        <title>Complete sequence of Clostridium thermocellum ATCC 27405.</title>
        <authorList>
            <consortium name="US DOE Joint Genome Institute"/>
            <person name="Copeland A."/>
            <person name="Lucas S."/>
            <person name="Lapidus A."/>
            <person name="Barry K."/>
            <person name="Detter J.C."/>
            <person name="Glavina del Rio T."/>
            <person name="Hammon N."/>
            <person name="Israni S."/>
            <person name="Dalin E."/>
            <person name="Tice H."/>
            <person name="Pitluck S."/>
            <person name="Chertkov O."/>
            <person name="Brettin T."/>
            <person name="Bruce D."/>
            <person name="Han C."/>
            <person name="Tapia R."/>
            <person name="Gilna P."/>
            <person name="Schmutz J."/>
            <person name="Larimer F."/>
            <person name="Land M."/>
            <person name="Hauser L."/>
            <person name="Kyrpides N."/>
            <person name="Mikhailova N."/>
            <person name="Wu J.H.D."/>
            <person name="Newcomb M."/>
            <person name="Richardson P."/>
        </authorList>
    </citation>
    <scope>NUCLEOTIDE SEQUENCE [LARGE SCALE GENOMIC DNA]</scope>
    <source>
        <strain>ATCC 27405 / DSM 1237 / JCM 9322 / NBRC 103400 / NCIMB 10682 / NRRL B-4536 / VPI 7372</strain>
    </source>
</reference>
<sequence length="460" mass="50723">MLKEYRTITEVAGPLMLVQKVEGVKYGELGEIELANGEIRRCKVLEVDGQNALVQLFESSTGINVATSKVRFLGRSIELPVSMDMLGRVFSGMGKPLDGGPNIIPDKRLDINGLPMNPAARNYPSEFIQTGISAIDGLNTLVRGQKLPIFSGSGLPHAQLAAQIARQAKVLGTDSKFAVVFAAVGITFEEADYFISDFKRTGAIDRTVLFINLANDPAIERISTPRMALTAAEYLAFDKGMHVLVIITDITNYAEALREVSAARKEVPGRRGYPGYLYTDLATIYERAGRRIDSEGSITLIPILTMPEDDKTHPIPDLTGYITEGQIILSRELHRKGVTPPIDVLPSLSRLKDKGIGKGKTREDHADTMNQLFAAYARGKEAKELAVILGDAALSDTDKLYAKFADAFEKEYVSQGFNEDRSIEKTLEIGWKLLSILPRSELKRIRDEYLDKYLPKAAEN</sequence>
<name>VATB_ACET2</name>
<protein>
    <recommendedName>
        <fullName evidence="1">V-type ATP synthase beta chain</fullName>
    </recommendedName>
    <alternativeName>
        <fullName evidence="1">V-ATPase subunit B</fullName>
    </alternativeName>
</protein>
<dbReference type="EMBL" id="CP000568">
    <property type="protein sequence ID" value="ABN53470.1"/>
    <property type="molecule type" value="Genomic_DNA"/>
</dbReference>
<dbReference type="RefSeq" id="WP_003513513.1">
    <property type="nucleotide sequence ID" value="NC_009012.1"/>
</dbReference>
<dbReference type="SMR" id="A3DHP1"/>
<dbReference type="STRING" id="203119.Cthe_2268"/>
<dbReference type="GeneID" id="35803417"/>
<dbReference type="KEGG" id="cth:Cthe_2268"/>
<dbReference type="eggNOG" id="COG1156">
    <property type="taxonomic scope" value="Bacteria"/>
</dbReference>
<dbReference type="HOGENOM" id="CLU_022916_0_0_9"/>
<dbReference type="OrthoDB" id="9802718at2"/>
<dbReference type="Proteomes" id="UP000002145">
    <property type="component" value="Chromosome"/>
</dbReference>
<dbReference type="GO" id="GO:0005524">
    <property type="term" value="F:ATP binding"/>
    <property type="evidence" value="ECO:0007669"/>
    <property type="project" value="UniProtKB-UniRule"/>
</dbReference>
<dbReference type="GO" id="GO:0046933">
    <property type="term" value="F:proton-transporting ATP synthase activity, rotational mechanism"/>
    <property type="evidence" value="ECO:0007669"/>
    <property type="project" value="UniProtKB-UniRule"/>
</dbReference>
<dbReference type="GO" id="GO:0042777">
    <property type="term" value="P:proton motive force-driven plasma membrane ATP synthesis"/>
    <property type="evidence" value="ECO:0007669"/>
    <property type="project" value="UniProtKB-UniRule"/>
</dbReference>
<dbReference type="CDD" id="cd18112">
    <property type="entry name" value="ATP-synt_V_A-type_beta_C"/>
    <property type="match status" value="1"/>
</dbReference>
<dbReference type="CDD" id="cd18118">
    <property type="entry name" value="ATP-synt_V_A-type_beta_N"/>
    <property type="match status" value="1"/>
</dbReference>
<dbReference type="CDD" id="cd01135">
    <property type="entry name" value="V_A-ATPase_B"/>
    <property type="match status" value="1"/>
</dbReference>
<dbReference type="Gene3D" id="3.40.50.12240">
    <property type="match status" value="1"/>
</dbReference>
<dbReference type="HAMAP" id="MF_00310">
    <property type="entry name" value="ATP_synth_B_arch"/>
    <property type="match status" value="1"/>
</dbReference>
<dbReference type="InterPro" id="IPR055190">
    <property type="entry name" value="ATP-synt_VA_C"/>
</dbReference>
<dbReference type="InterPro" id="IPR020003">
    <property type="entry name" value="ATPase_a/bsu_AS"/>
</dbReference>
<dbReference type="InterPro" id="IPR004100">
    <property type="entry name" value="ATPase_F1/V1/A1_a/bsu_N"/>
</dbReference>
<dbReference type="InterPro" id="IPR000194">
    <property type="entry name" value="ATPase_F1/V1/A1_a/bsu_nucl-bd"/>
</dbReference>
<dbReference type="InterPro" id="IPR027417">
    <property type="entry name" value="P-loop_NTPase"/>
</dbReference>
<dbReference type="InterPro" id="IPR022879">
    <property type="entry name" value="V-ATPase_su_B/beta"/>
</dbReference>
<dbReference type="NCBIfam" id="NF003235">
    <property type="entry name" value="PRK04196.1"/>
    <property type="match status" value="1"/>
</dbReference>
<dbReference type="PANTHER" id="PTHR43389">
    <property type="entry name" value="V-TYPE PROTON ATPASE SUBUNIT B"/>
    <property type="match status" value="1"/>
</dbReference>
<dbReference type="PANTHER" id="PTHR43389:SF4">
    <property type="entry name" value="V-TYPE PROTON ATPASE SUBUNIT B"/>
    <property type="match status" value="1"/>
</dbReference>
<dbReference type="Pfam" id="PF00006">
    <property type="entry name" value="ATP-synt_ab"/>
    <property type="match status" value="1"/>
</dbReference>
<dbReference type="Pfam" id="PF02874">
    <property type="entry name" value="ATP-synt_ab_N"/>
    <property type="match status" value="1"/>
</dbReference>
<dbReference type="Pfam" id="PF22919">
    <property type="entry name" value="ATP-synt_VA_C"/>
    <property type="match status" value="1"/>
</dbReference>
<dbReference type="PIRSF" id="PIRSF039114">
    <property type="entry name" value="V-ATPsynth_beta/V-ATPase_B"/>
    <property type="match status" value="1"/>
</dbReference>
<dbReference type="SUPFAM" id="SSF47917">
    <property type="entry name" value="C-terminal domain of alpha and beta subunits of F1 ATP synthase"/>
    <property type="match status" value="1"/>
</dbReference>
<dbReference type="SUPFAM" id="SSF52540">
    <property type="entry name" value="P-loop containing nucleoside triphosphate hydrolases"/>
    <property type="match status" value="1"/>
</dbReference>
<dbReference type="PROSITE" id="PS00152">
    <property type="entry name" value="ATPASE_ALPHA_BETA"/>
    <property type="match status" value="1"/>
</dbReference>
<evidence type="ECO:0000255" key="1">
    <source>
        <dbReference type="HAMAP-Rule" id="MF_00310"/>
    </source>
</evidence>
<accession>A3DHP1</accession>
<organism>
    <name type="scientific">Acetivibrio thermocellus (strain ATCC 27405 / DSM 1237 / JCM 9322 / NBRC 103400 / NCIMB 10682 / NRRL B-4536 / VPI 7372)</name>
    <name type="common">Clostridium thermocellum</name>
    <dbReference type="NCBI Taxonomy" id="203119"/>
    <lineage>
        <taxon>Bacteria</taxon>
        <taxon>Bacillati</taxon>
        <taxon>Bacillota</taxon>
        <taxon>Clostridia</taxon>
        <taxon>Eubacteriales</taxon>
        <taxon>Oscillospiraceae</taxon>
        <taxon>Acetivibrio</taxon>
    </lineage>
</organism>
<gene>
    <name evidence="1" type="primary">atpB</name>
    <name type="ordered locus">Cthe_2268</name>
</gene>
<feature type="chain" id="PRO_0000322496" description="V-type ATP synthase beta chain">
    <location>
        <begin position="1"/>
        <end position="460"/>
    </location>
</feature>
<keyword id="KW-0066">ATP synthesis</keyword>
<keyword id="KW-0375">Hydrogen ion transport</keyword>
<keyword id="KW-0406">Ion transport</keyword>
<keyword id="KW-1185">Reference proteome</keyword>
<keyword id="KW-0813">Transport</keyword>
<comment type="function">
    <text evidence="1">Produces ATP from ADP in the presence of a proton gradient across the membrane. The V-type beta chain is a regulatory subunit.</text>
</comment>
<comment type="similarity">
    <text evidence="1">Belongs to the ATPase alpha/beta chains family.</text>
</comment>
<proteinExistence type="inferred from homology"/>